<feature type="signal peptide" evidence="2">
    <location>
        <begin position="1"/>
        <end position="20"/>
    </location>
</feature>
<feature type="propeptide" id="PRO_0000400976" evidence="1">
    <location>
        <begin position="21"/>
        <end position="37"/>
    </location>
</feature>
<feature type="peptide" id="PRO_0000400977" description="Hainantoxin-X-3">
    <location>
        <begin position="38"/>
        <end position="65"/>
    </location>
</feature>
<feature type="disulfide bond" evidence="1">
    <location>
        <begin position="46"/>
        <end position="59"/>
    </location>
</feature>
<feature type="disulfide bond" evidence="1">
    <location>
        <begin position="55"/>
        <end position="64"/>
    </location>
</feature>
<accession>D2Y2R4</accession>
<keyword id="KW-0108">Calcium channel impairing toxin</keyword>
<keyword id="KW-1015">Disulfide bond</keyword>
<keyword id="KW-0872">Ion channel impairing toxin</keyword>
<keyword id="KW-0960">Knottin</keyword>
<keyword id="KW-0528">Neurotoxin</keyword>
<keyword id="KW-0964">Secreted</keyword>
<keyword id="KW-0732">Signal</keyword>
<keyword id="KW-0800">Toxin</keyword>
<keyword id="KW-1218">Voltage-gated calcium channel impairing toxin</keyword>
<reference key="1">
    <citation type="journal article" date="2010" name="J. Proteome Res.">
        <title>Molecular diversification of peptide toxins from the tarantula Haplopelma hainanum (Ornithoctonus hainana) venom based on transcriptomic, peptidomic, and genomic analyses.</title>
        <authorList>
            <person name="Tang X."/>
            <person name="Zhang Y."/>
            <person name="Hu W."/>
            <person name="Xu D."/>
            <person name="Tao H."/>
            <person name="Yang X."/>
            <person name="Li Y."/>
            <person name="Jiang L."/>
            <person name="Liang S."/>
        </authorList>
    </citation>
    <scope>NUCLEOTIDE SEQUENCE [LARGE SCALE GENOMIC DNA]</scope>
    <source>
        <tissue>Venom gland</tissue>
    </source>
</reference>
<organism>
    <name type="scientific">Cyriopagopus hainanus</name>
    <name type="common">Chinese bird spider</name>
    <name type="synonym">Haplopelma hainanum</name>
    <dbReference type="NCBI Taxonomy" id="209901"/>
    <lineage>
        <taxon>Eukaryota</taxon>
        <taxon>Metazoa</taxon>
        <taxon>Ecdysozoa</taxon>
        <taxon>Arthropoda</taxon>
        <taxon>Chelicerata</taxon>
        <taxon>Arachnida</taxon>
        <taxon>Araneae</taxon>
        <taxon>Mygalomorphae</taxon>
        <taxon>Theraphosidae</taxon>
        <taxon>Haplopelma</taxon>
    </lineage>
</organism>
<proteinExistence type="inferred from homology"/>
<dbReference type="EMBL" id="GU293141">
    <property type="protein sequence ID" value="ADB56957.1"/>
    <property type="molecule type" value="Genomic_DNA"/>
</dbReference>
<dbReference type="SMR" id="D2Y2R4"/>
<dbReference type="ArachnoServer" id="AS001672">
    <property type="toxin name" value="omega-theraphotoxin-Hhn2c"/>
</dbReference>
<dbReference type="GO" id="GO:0005576">
    <property type="term" value="C:extracellular region"/>
    <property type="evidence" value="ECO:0007669"/>
    <property type="project" value="UniProtKB-SubCell"/>
</dbReference>
<dbReference type="GO" id="GO:0005246">
    <property type="term" value="F:calcium channel regulator activity"/>
    <property type="evidence" value="ECO:0007669"/>
    <property type="project" value="UniProtKB-KW"/>
</dbReference>
<dbReference type="GO" id="GO:0090729">
    <property type="term" value="F:toxin activity"/>
    <property type="evidence" value="ECO:0007669"/>
    <property type="project" value="UniProtKB-KW"/>
</dbReference>
<dbReference type="SUPFAM" id="SSF57059">
    <property type="entry name" value="omega toxin-like"/>
    <property type="match status" value="1"/>
</dbReference>
<evidence type="ECO:0000250" key="1"/>
<evidence type="ECO:0000255" key="2"/>
<evidence type="ECO:0000305" key="3"/>
<comment type="function">
    <text evidence="1">Reversibly blocks N-type calcium channels (Cav2.2/CACNA1B) in rat dorsal root ganglion cells. Elicits no toxic symptoms in either vertebrates or invertebrates during a period of 48 hours post-injection, when it was assayed in vivo by direct injection into mice and cockroaches (By similarity).</text>
</comment>
<comment type="subcellular location">
    <subcellularLocation>
        <location evidence="1">Secreted</location>
    </subcellularLocation>
</comment>
<comment type="tissue specificity">
    <text>Expressed by the venom gland.</text>
</comment>
<comment type="domain">
    <text evidence="1">The presence of a 'disulfide through disulfide knot' structurally defines this protein as a knottin.</text>
</comment>
<comment type="similarity">
    <text>Belongs to the neurotoxin 36 family. 02 subfamily.</text>
</comment>
<comment type="caution">
    <text evidence="3">While it is structurally defined as a knottin it lacks the conserved Cys residue in position 39.</text>
</comment>
<sequence>MNMKILVLVAVLCLVVSTHAERHSKTDMEDSPMIQERKYLPPGKPCYEATQKIPCCGVCSHNNCT</sequence>
<name>H10C1_CYRHA</name>
<protein>
    <recommendedName>
        <fullName>Hainantoxin-X-3</fullName>
        <shortName>HNTX-X-3</shortName>
    </recommendedName>
</protein>